<reference key="1">
    <citation type="journal article" date="2002" name="Proc. Natl. Acad. Sci. U.S.A.">
        <title>The genome sequence of the facultative intracellular pathogen Brucella melitensis.</title>
        <authorList>
            <person name="DelVecchio V.G."/>
            <person name="Kapatral V."/>
            <person name="Redkar R.J."/>
            <person name="Patra G."/>
            <person name="Mujer C."/>
            <person name="Los T."/>
            <person name="Ivanova N."/>
            <person name="Anderson I."/>
            <person name="Bhattacharyya A."/>
            <person name="Lykidis A."/>
            <person name="Reznik G."/>
            <person name="Jablonski L."/>
            <person name="Larsen N."/>
            <person name="D'Souza M."/>
            <person name="Bernal A."/>
            <person name="Mazur M."/>
            <person name="Goltsman E."/>
            <person name="Selkov E."/>
            <person name="Elzer P.H."/>
            <person name="Hagius S."/>
            <person name="O'Callaghan D."/>
            <person name="Letesson J.-J."/>
            <person name="Haselkorn R."/>
            <person name="Kyrpides N.C."/>
            <person name="Overbeek R."/>
        </authorList>
    </citation>
    <scope>NUCLEOTIDE SEQUENCE [LARGE SCALE GENOMIC DNA]</scope>
    <source>
        <strain>ATCC 23456 / CCUG 17765 / NCTC 10094 / 16M</strain>
    </source>
</reference>
<keyword id="KW-0028">Amino-acid biosynthesis</keyword>
<keyword id="KW-0963">Cytoplasm</keyword>
<keyword id="KW-0315">Glutamine amidotransferase</keyword>
<keyword id="KW-0368">Histidine biosynthesis</keyword>
<keyword id="KW-0378">Hydrolase</keyword>
<keyword id="KW-0456">Lyase</keyword>
<proteinExistence type="inferred from homology"/>
<evidence type="ECO:0000255" key="1">
    <source>
        <dbReference type="HAMAP-Rule" id="MF_00278"/>
    </source>
</evidence>
<evidence type="ECO:0000305" key="2"/>
<sequence>MRVAIIDYGSGNLRSATKAFERAAHESGISAEIDLTCDAQRVASADRIVLPGVGAYADCRRGLDAVPGMVEALNDTVLKKARPFLGICVGMQLMSERGLEKTVTNGLGWIAGDVREMVPSDASLKIPQIGWNRIHVKHSHPIFDGIPTGDDGLHAYFVHSYMLDAKNASDVLAVTDYGGDVTAAVGRDNMVGTQFHPEKSQLLGLSFIANFLKWKP</sequence>
<name>HIS5_BRUME</name>
<organism>
    <name type="scientific">Brucella melitensis biotype 1 (strain ATCC 23456 / CCUG 17765 / NCTC 10094 / 16M)</name>
    <dbReference type="NCBI Taxonomy" id="224914"/>
    <lineage>
        <taxon>Bacteria</taxon>
        <taxon>Pseudomonadati</taxon>
        <taxon>Pseudomonadota</taxon>
        <taxon>Alphaproteobacteria</taxon>
        <taxon>Hyphomicrobiales</taxon>
        <taxon>Brucellaceae</taxon>
        <taxon>Brucella/Ochrobactrum group</taxon>
        <taxon>Brucella</taxon>
    </lineage>
</organism>
<dbReference type="EC" id="4.3.2.10" evidence="1"/>
<dbReference type="EC" id="3.5.1.2" evidence="1"/>
<dbReference type="EMBL" id="AE008917">
    <property type="protein sequence ID" value="AAL53224.1"/>
    <property type="status" value="ALT_INIT"/>
    <property type="molecule type" value="Genomic_DNA"/>
</dbReference>
<dbReference type="PIR" id="AE3507">
    <property type="entry name" value="AE3507"/>
</dbReference>
<dbReference type="RefSeq" id="WP_004684542.1">
    <property type="nucleotide sequence ID" value="NZ_GG703778.1"/>
</dbReference>
<dbReference type="SMR" id="Q8YE35"/>
<dbReference type="GeneID" id="29594926"/>
<dbReference type="KEGG" id="bme:BMEI2043"/>
<dbReference type="KEGG" id="bmel:DK63_1450"/>
<dbReference type="PATRIC" id="fig|224914.52.peg.1527"/>
<dbReference type="eggNOG" id="COG0118">
    <property type="taxonomic scope" value="Bacteria"/>
</dbReference>
<dbReference type="PhylomeDB" id="Q8YE35"/>
<dbReference type="UniPathway" id="UPA00031">
    <property type="reaction ID" value="UER00010"/>
</dbReference>
<dbReference type="Proteomes" id="UP000000419">
    <property type="component" value="Chromosome I"/>
</dbReference>
<dbReference type="GO" id="GO:0005737">
    <property type="term" value="C:cytoplasm"/>
    <property type="evidence" value="ECO:0007669"/>
    <property type="project" value="UniProtKB-SubCell"/>
</dbReference>
<dbReference type="GO" id="GO:0004359">
    <property type="term" value="F:glutaminase activity"/>
    <property type="evidence" value="ECO:0007669"/>
    <property type="project" value="UniProtKB-EC"/>
</dbReference>
<dbReference type="GO" id="GO:0000107">
    <property type="term" value="F:imidazoleglycerol-phosphate synthase activity"/>
    <property type="evidence" value="ECO:0007669"/>
    <property type="project" value="UniProtKB-UniRule"/>
</dbReference>
<dbReference type="GO" id="GO:0016829">
    <property type="term" value="F:lyase activity"/>
    <property type="evidence" value="ECO:0007669"/>
    <property type="project" value="UniProtKB-KW"/>
</dbReference>
<dbReference type="GO" id="GO:0000105">
    <property type="term" value="P:L-histidine biosynthetic process"/>
    <property type="evidence" value="ECO:0007669"/>
    <property type="project" value="UniProtKB-UniRule"/>
</dbReference>
<dbReference type="CDD" id="cd01748">
    <property type="entry name" value="GATase1_IGP_Synthase"/>
    <property type="match status" value="1"/>
</dbReference>
<dbReference type="Gene3D" id="3.40.50.880">
    <property type="match status" value="1"/>
</dbReference>
<dbReference type="HAMAP" id="MF_00278">
    <property type="entry name" value="HisH"/>
    <property type="match status" value="1"/>
</dbReference>
<dbReference type="InterPro" id="IPR029062">
    <property type="entry name" value="Class_I_gatase-like"/>
</dbReference>
<dbReference type="InterPro" id="IPR017926">
    <property type="entry name" value="GATASE"/>
</dbReference>
<dbReference type="InterPro" id="IPR010139">
    <property type="entry name" value="Imidazole-glycPsynth_HisH"/>
</dbReference>
<dbReference type="NCBIfam" id="TIGR01855">
    <property type="entry name" value="IMP_synth_hisH"/>
    <property type="match status" value="1"/>
</dbReference>
<dbReference type="PANTHER" id="PTHR42701">
    <property type="entry name" value="IMIDAZOLE GLYCEROL PHOSPHATE SYNTHASE SUBUNIT HISH"/>
    <property type="match status" value="1"/>
</dbReference>
<dbReference type="PANTHER" id="PTHR42701:SF1">
    <property type="entry name" value="IMIDAZOLE GLYCEROL PHOSPHATE SYNTHASE SUBUNIT HISH"/>
    <property type="match status" value="1"/>
</dbReference>
<dbReference type="Pfam" id="PF00117">
    <property type="entry name" value="GATase"/>
    <property type="match status" value="1"/>
</dbReference>
<dbReference type="PIRSF" id="PIRSF000495">
    <property type="entry name" value="Amidotransf_hisH"/>
    <property type="match status" value="1"/>
</dbReference>
<dbReference type="SUPFAM" id="SSF52317">
    <property type="entry name" value="Class I glutamine amidotransferase-like"/>
    <property type="match status" value="1"/>
</dbReference>
<dbReference type="PROSITE" id="PS51273">
    <property type="entry name" value="GATASE_TYPE_1"/>
    <property type="match status" value="1"/>
</dbReference>
<comment type="function">
    <text evidence="1">IGPS catalyzes the conversion of PRFAR and glutamine to IGP, AICAR and glutamate. The HisH subunit catalyzes the hydrolysis of glutamine to glutamate and ammonia as part of the synthesis of IGP and AICAR. The resulting ammonia molecule is channeled to the active site of HisF.</text>
</comment>
<comment type="catalytic activity">
    <reaction evidence="1">
        <text>5-[(5-phospho-1-deoxy-D-ribulos-1-ylimino)methylamino]-1-(5-phospho-beta-D-ribosyl)imidazole-4-carboxamide + L-glutamine = D-erythro-1-(imidazol-4-yl)glycerol 3-phosphate + 5-amino-1-(5-phospho-beta-D-ribosyl)imidazole-4-carboxamide + L-glutamate + H(+)</text>
        <dbReference type="Rhea" id="RHEA:24793"/>
        <dbReference type="ChEBI" id="CHEBI:15378"/>
        <dbReference type="ChEBI" id="CHEBI:29985"/>
        <dbReference type="ChEBI" id="CHEBI:58278"/>
        <dbReference type="ChEBI" id="CHEBI:58359"/>
        <dbReference type="ChEBI" id="CHEBI:58475"/>
        <dbReference type="ChEBI" id="CHEBI:58525"/>
        <dbReference type="EC" id="4.3.2.10"/>
    </reaction>
</comment>
<comment type="catalytic activity">
    <reaction evidence="1">
        <text>L-glutamine + H2O = L-glutamate + NH4(+)</text>
        <dbReference type="Rhea" id="RHEA:15889"/>
        <dbReference type="ChEBI" id="CHEBI:15377"/>
        <dbReference type="ChEBI" id="CHEBI:28938"/>
        <dbReference type="ChEBI" id="CHEBI:29985"/>
        <dbReference type="ChEBI" id="CHEBI:58359"/>
        <dbReference type="EC" id="3.5.1.2"/>
    </reaction>
</comment>
<comment type="pathway">
    <text evidence="1">Amino-acid biosynthesis; L-histidine biosynthesis; L-histidine from 5-phospho-alpha-D-ribose 1-diphosphate: step 5/9.</text>
</comment>
<comment type="subunit">
    <text evidence="1">Heterodimer of HisH and HisF.</text>
</comment>
<comment type="subcellular location">
    <subcellularLocation>
        <location evidence="1">Cytoplasm</location>
    </subcellularLocation>
</comment>
<comment type="sequence caution" evidence="2">
    <conflict type="erroneous initiation">
        <sequence resource="EMBL-CDS" id="AAL53224"/>
    </conflict>
</comment>
<accession>Q8YE35</accession>
<feature type="chain" id="PRO_0000152352" description="Imidazole glycerol phosphate synthase subunit HisH">
    <location>
        <begin position="1"/>
        <end position="216"/>
    </location>
</feature>
<feature type="domain" description="Glutamine amidotransferase type-1" evidence="1">
    <location>
        <begin position="2"/>
        <end position="216"/>
    </location>
</feature>
<feature type="active site" description="Nucleophile" evidence="1">
    <location>
        <position position="88"/>
    </location>
</feature>
<feature type="active site" evidence="1">
    <location>
        <position position="196"/>
    </location>
</feature>
<feature type="active site" evidence="1">
    <location>
        <position position="198"/>
    </location>
</feature>
<gene>
    <name evidence="1" type="primary">hisH</name>
    <name type="ordered locus">BMEI2043</name>
</gene>
<protein>
    <recommendedName>
        <fullName evidence="1">Imidazole glycerol phosphate synthase subunit HisH</fullName>
        <ecNumber evidence="1">4.3.2.10</ecNumber>
    </recommendedName>
    <alternativeName>
        <fullName evidence="1">IGP synthase glutaminase subunit</fullName>
        <ecNumber evidence="1">3.5.1.2</ecNumber>
    </alternativeName>
    <alternativeName>
        <fullName evidence="1">IGP synthase subunit HisH</fullName>
    </alternativeName>
    <alternativeName>
        <fullName evidence="1">ImGP synthase subunit HisH</fullName>
        <shortName evidence="1">IGPS subunit HisH</shortName>
    </alternativeName>
</protein>